<keyword id="KW-0067">ATP-binding</keyword>
<keyword id="KW-0129">CBS domain</keyword>
<keyword id="KW-0275">Fatty acid biosynthesis</keyword>
<keyword id="KW-0276">Fatty acid metabolism</keyword>
<keyword id="KW-0325">Glycoprotein</keyword>
<keyword id="KW-0444">Lipid biosynthesis</keyword>
<keyword id="KW-0443">Lipid metabolism</keyword>
<keyword id="KW-0547">Nucleotide-binding</keyword>
<keyword id="KW-0597">Phosphoprotein</keyword>
<keyword id="KW-1185">Reference proteome</keyword>
<keyword id="KW-0677">Repeat</keyword>
<evidence type="ECO:0000250" key="1"/>
<evidence type="ECO:0000250" key="2">
    <source>
        <dbReference type="UniProtKB" id="P54619"/>
    </source>
</evidence>
<evidence type="ECO:0000250" key="3">
    <source>
        <dbReference type="UniProtKB" id="P80385"/>
    </source>
</evidence>
<evidence type="ECO:0000255" key="4">
    <source>
        <dbReference type="PROSITE-ProRule" id="PRU00703"/>
    </source>
</evidence>
<evidence type="ECO:0000256" key="5">
    <source>
        <dbReference type="SAM" id="MobiDB-lite"/>
    </source>
</evidence>
<evidence type="ECO:0000305" key="6"/>
<dbReference type="EMBL" id="AF329081">
    <property type="protein sequence ID" value="AAK19307.1"/>
    <property type="molecule type" value="Genomic_DNA"/>
</dbReference>
<dbReference type="EMBL" id="BT025456">
    <property type="protein sequence ID" value="ABF57412.1"/>
    <property type="molecule type" value="mRNA"/>
</dbReference>
<dbReference type="EMBL" id="BC113296">
    <property type="protein sequence ID" value="AAI13297.1"/>
    <property type="molecule type" value="mRNA"/>
</dbReference>
<dbReference type="RefSeq" id="NP_777011.2">
    <property type="nucleotide sequence ID" value="NM_174586.2"/>
</dbReference>
<dbReference type="SMR" id="P58108"/>
<dbReference type="CORUM" id="P58108"/>
<dbReference type="FunCoup" id="P58108">
    <property type="interactions" value="3317"/>
</dbReference>
<dbReference type="STRING" id="9913.ENSBTAP00000057078"/>
<dbReference type="PaxDb" id="9913-ENSBTAP00000043459"/>
<dbReference type="GeneID" id="282324"/>
<dbReference type="KEGG" id="bta:282324"/>
<dbReference type="CTD" id="5571"/>
<dbReference type="VEuPathDB" id="HostDB:ENSBTAG00000014426"/>
<dbReference type="eggNOG" id="KOG1764">
    <property type="taxonomic scope" value="Eukaryota"/>
</dbReference>
<dbReference type="InParanoid" id="P58108"/>
<dbReference type="OMA" id="TASIHPF"/>
<dbReference type="OrthoDB" id="449052at2759"/>
<dbReference type="Reactome" id="R-BTA-1632852">
    <property type="pathway name" value="Macroautophagy"/>
</dbReference>
<dbReference type="Reactome" id="R-BTA-380972">
    <property type="pathway name" value="Energy dependent regulation of mTOR by LKB1-AMPK"/>
</dbReference>
<dbReference type="Reactome" id="R-BTA-5628897">
    <property type="pathway name" value="TP53 Regulates Metabolic Genes"/>
</dbReference>
<dbReference type="Reactome" id="R-BTA-6804756">
    <property type="pathway name" value="Regulation of TP53 Activity through Phosphorylation"/>
</dbReference>
<dbReference type="Proteomes" id="UP000009136">
    <property type="component" value="Chromosome 5"/>
</dbReference>
<dbReference type="Bgee" id="ENSBTAG00000014426">
    <property type="expression patterns" value="Expressed in myometrium and 103 other cell types or tissues"/>
</dbReference>
<dbReference type="GO" id="GO:0005737">
    <property type="term" value="C:cytoplasm"/>
    <property type="evidence" value="ECO:0000318"/>
    <property type="project" value="GO_Central"/>
</dbReference>
<dbReference type="GO" id="GO:0005829">
    <property type="term" value="C:cytosol"/>
    <property type="evidence" value="ECO:0007669"/>
    <property type="project" value="UniProtKB-ARBA"/>
</dbReference>
<dbReference type="GO" id="GO:0031588">
    <property type="term" value="C:nucleotide-activated protein kinase complex"/>
    <property type="evidence" value="ECO:0000250"/>
    <property type="project" value="UniProtKB"/>
</dbReference>
<dbReference type="GO" id="GO:0005634">
    <property type="term" value="C:nucleus"/>
    <property type="evidence" value="ECO:0000250"/>
    <property type="project" value="AgBase"/>
</dbReference>
<dbReference type="GO" id="GO:0043531">
    <property type="term" value="F:ADP binding"/>
    <property type="evidence" value="ECO:0000250"/>
    <property type="project" value="UniProtKB"/>
</dbReference>
<dbReference type="GO" id="GO:0016208">
    <property type="term" value="F:AMP binding"/>
    <property type="evidence" value="ECO:0000250"/>
    <property type="project" value="UniProtKB"/>
</dbReference>
<dbReference type="GO" id="GO:0005524">
    <property type="term" value="F:ATP binding"/>
    <property type="evidence" value="ECO:0000250"/>
    <property type="project" value="UniProtKB"/>
</dbReference>
<dbReference type="GO" id="GO:0019901">
    <property type="term" value="F:protein kinase binding"/>
    <property type="evidence" value="ECO:0000318"/>
    <property type="project" value="GO_Central"/>
</dbReference>
<dbReference type="GO" id="GO:0019887">
    <property type="term" value="F:protein kinase regulator activity"/>
    <property type="evidence" value="ECO:0000250"/>
    <property type="project" value="UniProtKB"/>
</dbReference>
<dbReference type="GO" id="GO:0042149">
    <property type="term" value="P:cellular response to glucose starvation"/>
    <property type="evidence" value="ECO:0000318"/>
    <property type="project" value="GO_Central"/>
</dbReference>
<dbReference type="GO" id="GO:0006633">
    <property type="term" value="P:fatty acid biosynthetic process"/>
    <property type="evidence" value="ECO:0007669"/>
    <property type="project" value="UniProtKB-KW"/>
</dbReference>
<dbReference type="GO" id="GO:0045722">
    <property type="term" value="P:positive regulation of gluconeogenesis"/>
    <property type="evidence" value="ECO:0000318"/>
    <property type="project" value="GO_Central"/>
</dbReference>
<dbReference type="GO" id="GO:0043609">
    <property type="term" value="P:regulation of carbon utilization"/>
    <property type="evidence" value="ECO:0000318"/>
    <property type="project" value="GO_Central"/>
</dbReference>
<dbReference type="GO" id="GO:0006110">
    <property type="term" value="P:regulation of glycolytic process"/>
    <property type="evidence" value="ECO:0000318"/>
    <property type="project" value="GO_Central"/>
</dbReference>
<dbReference type="CDD" id="cd04618">
    <property type="entry name" value="CBS_euAMPK_gamma-like_repeat1"/>
    <property type="match status" value="1"/>
</dbReference>
<dbReference type="CDD" id="cd04641">
    <property type="entry name" value="CBS_euAMPK_gamma-like_repeat2"/>
    <property type="match status" value="1"/>
</dbReference>
<dbReference type="FunFam" id="3.10.580.10:FF:000003">
    <property type="entry name" value="Protein kinase AMP-activated non-catalytic subunit gamma 1"/>
    <property type="match status" value="1"/>
</dbReference>
<dbReference type="FunFam" id="3.10.580.10:FF:000004">
    <property type="entry name" value="Protein kinase AMP-activated non-catalytic subunit gamma 2"/>
    <property type="match status" value="1"/>
</dbReference>
<dbReference type="Gene3D" id="3.10.580.10">
    <property type="entry name" value="CBS-domain"/>
    <property type="match status" value="2"/>
</dbReference>
<dbReference type="InterPro" id="IPR050511">
    <property type="entry name" value="AMPK_gamma/SDS23_families"/>
</dbReference>
<dbReference type="InterPro" id="IPR000644">
    <property type="entry name" value="CBS_dom"/>
</dbReference>
<dbReference type="InterPro" id="IPR046342">
    <property type="entry name" value="CBS_dom_sf"/>
</dbReference>
<dbReference type="PANTHER" id="PTHR13780:SF38">
    <property type="entry name" value="5'-AMP-ACTIVATED PROTEIN KINASE SUBUNIT GAMMA-1"/>
    <property type="match status" value="1"/>
</dbReference>
<dbReference type="PANTHER" id="PTHR13780">
    <property type="entry name" value="AMP-ACTIVATED PROTEIN KINASE, GAMMA REGULATORY SUBUNIT"/>
    <property type="match status" value="1"/>
</dbReference>
<dbReference type="Pfam" id="PF00571">
    <property type="entry name" value="CBS"/>
    <property type="match status" value="4"/>
</dbReference>
<dbReference type="SMART" id="SM00116">
    <property type="entry name" value="CBS"/>
    <property type="match status" value="4"/>
</dbReference>
<dbReference type="SUPFAM" id="SSF54631">
    <property type="entry name" value="CBS-domain pair"/>
    <property type="match status" value="2"/>
</dbReference>
<dbReference type="PROSITE" id="PS51371">
    <property type="entry name" value="CBS"/>
    <property type="match status" value="4"/>
</dbReference>
<comment type="function">
    <text evidence="2">AMP/ATP-binding subunit of AMP-activated protein kinase (AMPK), an energy sensor protein kinase that plays a key role in regulating cellular energy metabolism. In response to reduction of intracellular ATP levels, AMPK activates energy-producing pathways and inhibits energy-consuming processes: inhibits protein, carbohydrate and lipid biosynthesis, as well as cell growth and proliferation. AMPK acts via direct phosphorylation of metabolic enzymes, and by longer-term effects via phosphorylation of transcription regulators. Also acts as a regulator of cellular polarity by remodeling the actin cytoskeleton; probably by indirectly activating myosin. Gamma non-catalytic subunit mediates binding to AMP, ADP and ATP, leading to activate or inhibit AMPK: AMP-binding results in allosteric activation of alpha catalytic subunit (PRKAA1 or PRKAA2) both by inducing phosphorylation and preventing dephosphorylation of catalytic subunits. ADP also stimulates phosphorylation, without stimulating already phosphorylated catalytic subunit. ATP promotes dephosphorylation of catalytic subunit, rendering the AMPK enzyme inactive.</text>
</comment>
<comment type="subunit">
    <text evidence="2">AMPK is a heterotrimer of an alpha catalytic subunit (PRKAA1 or PRKAA2), a beta (PRKAB1 or PRKAB2) and a gamma non-catalytic subunits (PRKAG1, PRKAG2 or PRKAG3). Interacts with FNIP1 and FNIP2.</text>
</comment>
<comment type="domain">
    <text evidence="1">The AMPK pseudosubstrate motif resembles the sequence around sites phosphorylated on target proteins of AMPK, except the presence of a non-phosphorylatable residue in place of Ser. In the absence of AMP this pseudosubstrate sequence may bind to the active site groove on the alpha subunit (PRKAA1 or PRKAA2), preventing phosphorylation by the upstream activating kinase STK11/LKB1 (By similarity).</text>
</comment>
<comment type="domain">
    <text evidence="3">The 4 CBS domains mediate binding to nucleotides. Of the 4 potential nucleotide-binding sites, 3 are occupied, designated as sites 1, 3, and 4 based on the CBS modules that provide the acidic residue for coordination with the 2'- and 3'-hydroxyl groups of the ribose of AMP. Of these, site 4 appears to be a structural site that retains a tightly held AMP molecule (AMP 3). The 2 remaining sites, 1 and 3, can bind either AMP, ADP or ATP. Site 1 (AMP, ADP or ATP 1) is the high-affinity binding site and likely accommodates AMP or ADP. Site 3 (AMP, ADP or ATP 2) is the weakest nucleotide-binding site on the gamma subunit, yet it is exquisitely sensitive to changes in nucleotide levels and this allows AMPK to respond rapidly to changes in cellular energy status. Site 3 is likely to be responsible for protection of a conserved threonine in the activation loop of the alpha catalytic subunit through conformational changes induced by binding of AMP or ADP.</text>
</comment>
<comment type="PTM">
    <text evidence="1">Phosphorylated by ULK1 and ULK2; leading to negatively regulate AMPK activity and suggesting the existence of a regulatory feedback loop between ULK1, ULK2 and AMPK.</text>
</comment>
<comment type="PTM">
    <text evidence="2">Glycosylated; O-GlcNAcylated by OGT, promoting the AMP-activated protein kinase (AMPK) activity.</text>
</comment>
<comment type="similarity">
    <text evidence="6">Belongs to the 5'-AMP-activated protein kinase gamma subunit family.</text>
</comment>
<proteinExistence type="evidence at transcript level"/>
<reference key="1">
    <citation type="submission" date="2000-12" db="EMBL/GenBank/DDBJ databases">
        <title>Characterization of the bovine AMPK gamma-1 gene.</title>
        <authorList>
            <person name="Benkel B."/>
            <person name="Kollers S."/>
            <person name="Fries R."/>
            <person name="Sazanov A."/>
            <person name="Yoshida E."/>
            <person name="Davoren J."/>
            <person name="Hickey D."/>
        </authorList>
    </citation>
    <scope>NUCLEOTIDE SEQUENCE [GENOMIC DNA]</scope>
</reference>
<reference key="2">
    <citation type="journal article" date="2005" name="BMC Genomics">
        <title>Characterization of 954 bovine full-CDS cDNA sequences.</title>
        <authorList>
            <person name="Harhay G.P."/>
            <person name="Sonstegard T.S."/>
            <person name="Keele J.W."/>
            <person name="Heaton M.P."/>
            <person name="Clawson M.L."/>
            <person name="Snelling W.M."/>
            <person name="Wiedmann R.T."/>
            <person name="Van Tassell C.P."/>
            <person name="Smith T.P.L."/>
        </authorList>
    </citation>
    <scope>NUCLEOTIDE SEQUENCE [LARGE SCALE MRNA]</scope>
</reference>
<reference key="3">
    <citation type="submission" date="2006-02" db="EMBL/GenBank/DDBJ databases">
        <authorList>
            <consortium name="NIH - Mammalian Gene Collection (MGC) project"/>
        </authorList>
    </citation>
    <scope>NUCLEOTIDE SEQUENCE [LARGE SCALE MRNA]</scope>
    <source>
        <strain>Hereford</strain>
        <tissue>Uterus</tissue>
    </source>
</reference>
<feature type="chain" id="PRO_0000204376" description="5'-AMP-activated protein kinase subunit gamma-1">
    <location>
        <begin position="1"/>
        <end position="330"/>
    </location>
</feature>
<feature type="domain" description="CBS 1" evidence="4">
    <location>
        <begin position="43"/>
        <end position="103"/>
    </location>
</feature>
<feature type="domain" description="CBS 2" evidence="4">
    <location>
        <begin position="125"/>
        <end position="187"/>
    </location>
</feature>
<feature type="domain" description="CBS 3" evidence="4">
    <location>
        <begin position="198"/>
        <end position="260"/>
    </location>
</feature>
<feature type="domain" description="CBS 4" evidence="4">
    <location>
        <begin position="272"/>
        <end position="329"/>
    </location>
</feature>
<feature type="region of interest" description="Disordered" evidence="5">
    <location>
        <begin position="1"/>
        <end position="24"/>
    </location>
</feature>
<feature type="short sequence motif" description="AMPK pseudosubstrate">
    <location>
        <begin position="138"/>
        <end position="159"/>
    </location>
</feature>
<feature type="binding site" evidence="3">
    <location>
        <position position="70"/>
    </location>
    <ligand>
        <name>ADP</name>
        <dbReference type="ChEBI" id="CHEBI:456216"/>
        <label>2</label>
    </ligand>
</feature>
<feature type="binding site" evidence="3">
    <location>
        <position position="70"/>
    </location>
    <ligand>
        <name>AMP</name>
        <dbReference type="ChEBI" id="CHEBI:456215"/>
        <label>2</label>
    </ligand>
</feature>
<feature type="binding site" evidence="3">
    <location>
        <position position="70"/>
    </location>
    <ligand>
        <name>ATP</name>
        <dbReference type="ChEBI" id="CHEBI:30616"/>
        <label>1</label>
    </ligand>
</feature>
<feature type="binding site" evidence="3">
    <location>
        <position position="70"/>
    </location>
    <ligand>
        <name>ATP</name>
        <dbReference type="ChEBI" id="CHEBI:30616"/>
        <label>2</label>
    </ligand>
</feature>
<feature type="binding site" evidence="3">
    <location>
        <begin position="85"/>
        <end position="90"/>
    </location>
    <ligand>
        <name>ADP</name>
        <dbReference type="ChEBI" id="CHEBI:456216"/>
        <label>1</label>
    </ligand>
</feature>
<feature type="binding site" evidence="3">
    <location>
        <begin position="85"/>
        <end position="90"/>
    </location>
    <ligand>
        <name>AMP</name>
        <dbReference type="ChEBI" id="CHEBI:456215"/>
        <label>1</label>
    </ligand>
</feature>
<feature type="binding site" evidence="3">
    <location>
        <begin position="85"/>
        <end position="90"/>
    </location>
    <ligand>
        <name>ATP</name>
        <dbReference type="ChEBI" id="CHEBI:30616"/>
        <label>1</label>
    </ligand>
</feature>
<feature type="binding site" evidence="3">
    <location>
        <position position="130"/>
    </location>
    <ligand>
        <name>ADP</name>
        <dbReference type="ChEBI" id="CHEBI:456216"/>
        <label>1</label>
    </ligand>
</feature>
<feature type="binding site" evidence="3">
    <location>
        <position position="130"/>
    </location>
    <ligand>
        <name>AMP</name>
        <dbReference type="ChEBI" id="CHEBI:456215"/>
        <label>1</label>
    </ligand>
</feature>
<feature type="binding site" evidence="3">
    <location>
        <position position="130"/>
    </location>
    <ligand>
        <name>ATP</name>
        <dbReference type="ChEBI" id="CHEBI:30616"/>
        <label>1</label>
    </ligand>
</feature>
<feature type="binding site" evidence="3">
    <location>
        <begin position="151"/>
        <end position="152"/>
    </location>
    <ligand>
        <name>ADP</name>
        <dbReference type="ChEBI" id="CHEBI:456216"/>
        <label>1</label>
    </ligand>
</feature>
<feature type="binding site" evidence="3">
    <location>
        <begin position="151"/>
        <end position="152"/>
    </location>
    <ligand>
        <name>AMP</name>
        <dbReference type="ChEBI" id="CHEBI:456215"/>
        <label>1</label>
    </ligand>
</feature>
<feature type="binding site" evidence="3">
    <location>
        <begin position="151"/>
        <end position="152"/>
    </location>
    <ligand>
        <name>ATP</name>
        <dbReference type="ChEBI" id="CHEBI:30616"/>
        <label>1</label>
    </ligand>
</feature>
<feature type="binding site" evidence="3">
    <location>
        <position position="151"/>
    </location>
    <ligand>
        <name>AMP</name>
        <dbReference type="ChEBI" id="CHEBI:456215"/>
        <label>3</label>
    </ligand>
</feature>
<feature type="binding site" evidence="3">
    <location>
        <position position="152"/>
    </location>
    <ligand>
        <name>ATP</name>
        <dbReference type="ChEBI" id="CHEBI:30616"/>
        <label>2</label>
    </ligand>
</feature>
<feature type="binding site" evidence="3">
    <location>
        <position position="170"/>
    </location>
    <ligand>
        <name>ADP</name>
        <dbReference type="ChEBI" id="CHEBI:456216"/>
        <label>2</label>
    </ligand>
</feature>
<feature type="binding site" evidence="3">
    <location>
        <position position="170"/>
    </location>
    <ligand>
        <name>AMP</name>
        <dbReference type="ChEBI" id="CHEBI:456215"/>
        <label>2</label>
    </ligand>
</feature>
<feature type="binding site" evidence="3">
    <location>
        <position position="170"/>
    </location>
    <ligand>
        <name>ATP</name>
        <dbReference type="ChEBI" id="CHEBI:30616"/>
        <label>2</label>
    </ligand>
</feature>
<feature type="binding site" evidence="3">
    <location>
        <position position="200"/>
    </location>
    <ligand>
        <name>AMP</name>
        <dbReference type="ChEBI" id="CHEBI:456215"/>
        <label>3</label>
    </ligand>
</feature>
<feature type="binding site" evidence="3">
    <location>
        <position position="205"/>
    </location>
    <ligand>
        <name>AMP</name>
        <dbReference type="ChEBI" id="CHEBI:456215"/>
        <label>3</label>
    </ligand>
</feature>
<feature type="binding site" evidence="3">
    <location>
        <begin position="226"/>
        <end position="227"/>
    </location>
    <ligand>
        <name>AMP</name>
        <dbReference type="ChEBI" id="CHEBI:456215"/>
        <label>3</label>
    </ligand>
</feature>
<feature type="binding site" evidence="3">
    <location>
        <begin position="242"/>
        <end position="245"/>
    </location>
    <ligand>
        <name>ADP</name>
        <dbReference type="ChEBI" id="CHEBI:456216"/>
        <label>2</label>
    </ligand>
</feature>
<feature type="binding site" evidence="3">
    <location>
        <begin position="242"/>
        <end position="245"/>
    </location>
    <ligand>
        <name>AMP</name>
        <dbReference type="ChEBI" id="CHEBI:456215"/>
        <label>2</label>
    </ligand>
</feature>
<feature type="binding site" evidence="3">
    <location>
        <begin position="242"/>
        <end position="245"/>
    </location>
    <ligand>
        <name>ATP</name>
        <dbReference type="ChEBI" id="CHEBI:30616"/>
        <label>2</label>
    </ligand>
</feature>
<feature type="binding site" evidence="3">
    <location>
        <position position="269"/>
    </location>
    <ligand>
        <name>ADP</name>
        <dbReference type="ChEBI" id="CHEBI:456216"/>
        <label>2</label>
    </ligand>
</feature>
<feature type="binding site" evidence="3">
    <location>
        <position position="269"/>
    </location>
    <ligand>
        <name>AMP</name>
        <dbReference type="ChEBI" id="CHEBI:456215"/>
        <label>2</label>
    </ligand>
</feature>
<feature type="binding site" evidence="3">
    <location>
        <position position="269"/>
    </location>
    <ligand>
        <name>ATP</name>
        <dbReference type="ChEBI" id="CHEBI:30616"/>
        <label>2</label>
    </ligand>
</feature>
<feature type="binding site" evidence="3">
    <location>
        <position position="277"/>
    </location>
    <ligand>
        <name>ADP</name>
        <dbReference type="ChEBI" id="CHEBI:456216"/>
        <label>2</label>
    </ligand>
</feature>
<feature type="binding site" evidence="3">
    <location>
        <position position="277"/>
    </location>
    <ligand>
        <name>AMP</name>
        <dbReference type="ChEBI" id="CHEBI:456215"/>
        <label>2</label>
    </ligand>
</feature>
<feature type="binding site" evidence="3">
    <location>
        <position position="277"/>
    </location>
    <ligand>
        <name>ATP</name>
        <dbReference type="ChEBI" id="CHEBI:30616"/>
        <label>2</label>
    </ligand>
</feature>
<feature type="binding site" evidence="3">
    <location>
        <begin position="298"/>
        <end position="299"/>
    </location>
    <ligand>
        <name>ADP</name>
        <dbReference type="ChEBI" id="CHEBI:456216"/>
        <label>2</label>
    </ligand>
</feature>
<feature type="binding site" evidence="3">
    <location>
        <begin position="298"/>
        <end position="299"/>
    </location>
    <ligand>
        <name>AMP</name>
        <dbReference type="ChEBI" id="CHEBI:456215"/>
        <label>2</label>
    </ligand>
</feature>
<feature type="binding site" evidence="3">
    <location>
        <begin position="298"/>
        <end position="299"/>
    </location>
    <ligand>
        <name>ATP</name>
        <dbReference type="ChEBI" id="CHEBI:30616"/>
        <label>2</label>
    </ligand>
</feature>
<feature type="binding site" evidence="3">
    <location>
        <position position="298"/>
    </location>
    <ligand>
        <name>AMP</name>
        <dbReference type="ChEBI" id="CHEBI:456215"/>
        <label>3</label>
    </ligand>
</feature>
<feature type="binding site" evidence="3">
    <location>
        <begin position="314"/>
        <end position="317"/>
    </location>
    <ligand>
        <name>AMP</name>
        <dbReference type="ChEBI" id="CHEBI:456215"/>
        <label>3</label>
    </ligand>
</feature>
<feature type="modified residue" description="Phosphoserine; by ULK1" evidence="3">
    <location>
        <position position="261"/>
    </location>
</feature>
<feature type="modified residue" description="Phosphothreonine; by ULK1" evidence="3">
    <location>
        <position position="263"/>
    </location>
</feature>
<feature type="modified residue" description="Phosphoserine; by ULK1" evidence="3">
    <location>
        <position position="270"/>
    </location>
</feature>
<feature type="sequence conflict" description="In Ref. 1; AAK19307." evidence="6" ref="1">
    <original>Y</original>
    <variation>F</variation>
    <location>
        <position position="121"/>
    </location>
</feature>
<sequence>MEAVPSSDSYPAVENEHLQETPESNNSVYTSFMKSHRCYDLIPTSSKLVVFDTSLQVKKAFFALVTNGVRAAPLWDSKKQSFVGMLTITDFINILHRYYKSALVQIYELEEHKIETWREVYLQDSFKPLVCISPNASLFDAVSSLIRNKIHRLPVIDPESGNTLYILTHKRILKFLKLFITEFPKPEFMSKSLEELQIGTYANIAMVRTTTPVYVALGIFVQHRVSALPVVDEKGRVVDIYSKFDVINLAAEKTYNNLDVSVTKALQHRSHYFEGVLKCYLHETLETIINRLVEAEVHRLVVVDENDVVKGIVSLSDILQALVLTGGEKP</sequence>
<protein>
    <recommendedName>
        <fullName>5'-AMP-activated protein kinase subunit gamma-1</fullName>
        <shortName>AMPK gamma1</shortName>
        <shortName>AMPK subunit gamma-1</shortName>
        <shortName>AMPKg</shortName>
    </recommendedName>
</protein>
<gene>
    <name type="primary">PRKAG1</name>
</gene>
<organism>
    <name type="scientific">Bos taurus</name>
    <name type="common">Bovine</name>
    <dbReference type="NCBI Taxonomy" id="9913"/>
    <lineage>
        <taxon>Eukaryota</taxon>
        <taxon>Metazoa</taxon>
        <taxon>Chordata</taxon>
        <taxon>Craniata</taxon>
        <taxon>Vertebrata</taxon>
        <taxon>Euteleostomi</taxon>
        <taxon>Mammalia</taxon>
        <taxon>Eutheria</taxon>
        <taxon>Laurasiatheria</taxon>
        <taxon>Artiodactyla</taxon>
        <taxon>Ruminantia</taxon>
        <taxon>Pecora</taxon>
        <taxon>Bovidae</taxon>
        <taxon>Bovinae</taxon>
        <taxon>Bos</taxon>
    </lineage>
</organism>
<accession>P58108</accession>
<accession>Q29RZ6</accession>
<name>AAKG1_BOVIN</name>